<dbReference type="PIR" id="JL0099">
    <property type="entry name" value="JL0099"/>
</dbReference>
<dbReference type="GO" id="GO:0005615">
    <property type="term" value="C:extracellular space"/>
    <property type="evidence" value="ECO:0007669"/>
    <property type="project" value="TreeGrafter"/>
</dbReference>
<dbReference type="GO" id="GO:0005179">
    <property type="term" value="F:hormone activity"/>
    <property type="evidence" value="ECO:0007669"/>
    <property type="project" value="UniProtKB-KW"/>
</dbReference>
<dbReference type="GO" id="GO:0006006">
    <property type="term" value="P:glucose metabolic process"/>
    <property type="evidence" value="ECO:0007669"/>
    <property type="project" value="UniProtKB-KW"/>
</dbReference>
<dbReference type="Gene3D" id="1.10.100.10">
    <property type="entry name" value="Insulin-like"/>
    <property type="match status" value="1"/>
</dbReference>
<dbReference type="InterPro" id="IPR004825">
    <property type="entry name" value="Insulin"/>
</dbReference>
<dbReference type="InterPro" id="IPR016179">
    <property type="entry name" value="Insulin-like"/>
</dbReference>
<dbReference type="InterPro" id="IPR036438">
    <property type="entry name" value="Insulin-like_sf"/>
</dbReference>
<dbReference type="InterPro" id="IPR022353">
    <property type="entry name" value="Insulin_CS"/>
</dbReference>
<dbReference type="PANTHER" id="PTHR11454:SF9">
    <property type="entry name" value="INSULIN"/>
    <property type="match status" value="1"/>
</dbReference>
<dbReference type="PANTHER" id="PTHR11454">
    <property type="entry name" value="INSULIN/INSULIN GROWTH FACTOR"/>
    <property type="match status" value="1"/>
</dbReference>
<dbReference type="Pfam" id="PF00049">
    <property type="entry name" value="Insulin"/>
    <property type="match status" value="1"/>
</dbReference>
<dbReference type="SMART" id="SM00078">
    <property type="entry name" value="IlGF"/>
    <property type="match status" value="1"/>
</dbReference>
<dbReference type="SUPFAM" id="SSF56994">
    <property type="entry name" value="Insulin-like"/>
    <property type="match status" value="1"/>
</dbReference>
<dbReference type="PROSITE" id="PS00262">
    <property type="entry name" value="INSULIN"/>
    <property type="match status" value="1"/>
</dbReference>
<accession>P41522</accession>
<feature type="propeptide" id="PRO_0000015749" description="C peptide">
    <location>
        <begin position="1"/>
        <end position="30"/>
    </location>
</feature>
<feature type="peptide" id="PRO_0000015750" description="Insulin A chain">
    <location>
        <begin position="33"/>
        <end position="53"/>
    </location>
</feature>
<feature type="disulfide bond">
    <location>
        <begin position="38"/>
        <end position="43"/>
    </location>
</feature>
<feature type="non-terminal residue">
    <location>
        <position position="1"/>
    </location>
</feature>
<sequence length="53" mass="5955">DVEPLLGFLSPKSGQENEVDDFPYKGQGELXXGIVEQCCHKPCNIFDLQNYCN</sequence>
<name>INS_ANGAN</name>
<reference key="1">
    <citation type="journal article" date="1989" name="Comp. Biochem. Physiol.">
        <title>Isolation and primary structure of the C-peptide of proinsulin from the European eel (Anguilla anguilla).</title>
        <authorList>
            <person name="Conlon J.M."/>
            <person name="Thim L."/>
        </authorList>
    </citation>
    <scope>PROTEIN SEQUENCE OF 1-30</scope>
    <source>
        <tissue>Pancreas</tissue>
    </source>
</reference>
<reference key="2">
    <citation type="journal article" date="1991" name="Gen. Comp. Endocrinol.">
        <title>The primary structure of glucagon-like peptide but not insulin has been conserved between the American eel, Anguilla rostrata and the European eel, Anguilla anguilla.</title>
        <authorList>
            <person name="Conlon J.M."/>
            <person name="Andrews P.C."/>
            <person name="Thim L."/>
            <person name="Moon T.W."/>
        </authorList>
    </citation>
    <scope>PROTEIN SEQUENCE OF 33-53</scope>
    <source>
        <tissue>Pancreas</tissue>
    </source>
</reference>
<gene>
    <name type="primary">ins</name>
</gene>
<evidence type="ECO:0000305" key="1"/>
<proteinExistence type="evidence at protein level"/>
<comment type="function">
    <text>Insulin decreases blood glucose concentration. It increases cell permeability to monosaccharides, amino acids and fatty acids. It accelerates glycolysis, the pentose phosphate cycle, and glycogen synthesis in liver.</text>
</comment>
<comment type="subunit">
    <text>Heterodimer of a B chain and an A chain linked by two disulfide bonds.</text>
</comment>
<comment type="subcellular location">
    <subcellularLocation>
        <location>Secreted</location>
    </subcellularLocation>
</comment>
<comment type="similarity">
    <text evidence="1">Belongs to the insulin family.</text>
</comment>
<comment type="caution">
    <text evidence="1">X's at positions 31-32 represent paired basic residues assumed by homology to be present in the precursor molecule.</text>
</comment>
<keyword id="KW-0119">Carbohydrate metabolism</keyword>
<keyword id="KW-0903">Direct protein sequencing</keyword>
<keyword id="KW-1015">Disulfide bond</keyword>
<keyword id="KW-0313">Glucose metabolism</keyword>
<keyword id="KW-0372">Hormone</keyword>
<keyword id="KW-0964">Secreted</keyword>
<protein>
    <recommendedName>
        <fullName>Insulin</fullName>
    </recommendedName>
    <component>
        <recommendedName>
            <fullName>Insulin A chain</fullName>
        </recommendedName>
    </component>
</protein>
<organism>
    <name type="scientific">Anguilla anguilla</name>
    <name type="common">European freshwater eel</name>
    <name type="synonym">Muraena anguilla</name>
    <dbReference type="NCBI Taxonomy" id="7936"/>
    <lineage>
        <taxon>Eukaryota</taxon>
        <taxon>Metazoa</taxon>
        <taxon>Chordata</taxon>
        <taxon>Craniata</taxon>
        <taxon>Vertebrata</taxon>
        <taxon>Euteleostomi</taxon>
        <taxon>Actinopterygii</taxon>
        <taxon>Neopterygii</taxon>
        <taxon>Teleostei</taxon>
        <taxon>Anguilliformes</taxon>
        <taxon>Anguillidae</taxon>
        <taxon>Anguilla</taxon>
    </lineage>
</organism>